<comment type="function">
    <text evidence="1">Catalyzes the conversion of glucosamine-6-phosphate to glucosamine-1-phosphate.</text>
</comment>
<comment type="catalytic activity">
    <reaction evidence="1">
        <text>alpha-D-glucosamine 1-phosphate = D-glucosamine 6-phosphate</text>
        <dbReference type="Rhea" id="RHEA:23424"/>
        <dbReference type="ChEBI" id="CHEBI:58516"/>
        <dbReference type="ChEBI" id="CHEBI:58725"/>
        <dbReference type="EC" id="5.4.2.10"/>
    </reaction>
</comment>
<comment type="cofactor">
    <cofactor evidence="1">
        <name>Mg(2+)</name>
        <dbReference type="ChEBI" id="CHEBI:18420"/>
    </cofactor>
    <text evidence="1">Binds 1 Mg(2+) ion per subunit.</text>
</comment>
<comment type="PTM">
    <text evidence="1">Activated by phosphorylation.</text>
</comment>
<comment type="similarity">
    <text evidence="1">Belongs to the phosphohexose mutase family.</text>
</comment>
<keyword id="KW-0413">Isomerase</keyword>
<keyword id="KW-0460">Magnesium</keyword>
<keyword id="KW-0479">Metal-binding</keyword>
<keyword id="KW-0597">Phosphoprotein</keyword>
<reference key="1">
    <citation type="submission" date="2006-05" db="EMBL/GenBank/DDBJ databases">
        <title>Complete sequence of chromosome 1 of Burkholderia cenocepacia AU 1054.</title>
        <authorList>
            <consortium name="US DOE Joint Genome Institute"/>
            <person name="Copeland A."/>
            <person name="Lucas S."/>
            <person name="Lapidus A."/>
            <person name="Barry K."/>
            <person name="Detter J.C."/>
            <person name="Glavina del Rio T."/>
            <person name="Hammon N."/>
            <person name="Israni S."/>
            <person name="Dalin E."/>
            <person name="Tice H."/>
            <person name="Pitluck S."/>
            <person name="Chain P."/>
            <person name="Malfatti S."/>
            <person name="Shin M."/>
            <person name="Vergez L."/>
            <person name="Schmutz J."/>
            <person name="Larimer F."/>
            <person name="Land M."/>
            <person name="Hauser L."/>
            <person name="Kyrpides N."/>
            <person name="Lykidis A."/>
            <person name="LiPuma J.J."/>
            <person name="Konstantinidis K."/>
            <person name="Tiedje J.M."/>
            <person name="Richardson P."/>
        </authorList>
    </citation>
    <scope>NUCLEOTIDE SEQUENCE [LARGE SCALE GENOMIC DNA]</scope>
    <source>
        <strain>AU 1054</strain>
    </source>
</reference>
<evidence type="ECO:0000255" key="1">
    <source>
        <dbReference type="HAMAP-Rule" id="MF_01554"/>
    </source>
</evidence>
<organism>
    <name type="scientific">Burkholderia orbicola (strain AU 1054)</name>
    <dbReference type="NCBI Taxonomy" id="331271"/>
    <lineage>
        <taxon>Bacteria</taxon>
        <taxon>Pseudomonadati</taxon>
        <taxon>Pseudomonadota</taxon>
        <taxon>Betaproteobacteria</taxon>
        <taxon>Burkholderiales</taxon>
        <taxon>Burkholderiaceae</taxon>
        <taxon>Burkholderia</taxon>
        <taxon>Burkholderia cepacia complex</taxon>
        <taxon>Burkholderia orbicola</taxon>
    </lineage>
</organism>
<name>GLMM_BURO1</name>
<proteinExistence type="inferred from homology"/>
<accession>Q1BXC7</accession>
<feature type="chain" id="PRO_0000301288" description="Phosphoglucosamine mutase">
    <location>
        <begin position="1"/>
        <end position="451"/>
    </location>
</feature>
<feature type="active site" description="Phosphoserine intermediate" evidence="1">
    <location>
        <position position="107"/>
    </location>
</feature>
<feature type="binding site" description="via phosphate group" evidence="1">
    <location>
        <position position="107"/>
    </location>
    <ligand>
        <name>Mg(2+)</name>
        <dbReference type="ChEBI" id="CHEBI:18420"/>
    </ligand>
</feature>
<feature type="binding site" evidence="1">
    <location>
        <position position="246"/>
    </location>
    <ligand>
        <name>Mg(2+)</name>
        <dbReference type="ChEBI" id="CHEBI:18420"/>
    </ligand>
</feature>
<feature type="binding site" evidence="1">
    <location>
        <position position="248"/>
    </location>
    <ligand>
        <name>Mg(2+)</name>
        <dbReference type="ChEBI" id="CHEBI:18420"/>
    </ligand>
</feature>
<feature type="binding site" evidence="1">
    <location>
        <position position="250"/>
    </location>
    <ligand>
        <name>Mg(2+)</name>
        <dbReference type="ChEBI" id="CHEBI:18420"/>
    </ligand>
</feature>
<feature type="modified residue" description="Phosphoserine" evidence="1">
    <location>
        <position position="107"/>
    </location>
</feature>
<protein>
    <recommendedName>
        <fullName evidence="1">Phosphoglucosamine mutase</fullName>
        <ecNumber evidence="1">5.4.2.10</ecNumber>
    </recommendedName>
</protein>
<gene>
    <name evidence="1" type="primary">glmM</name>
    <name type="ordered locus">Bcen_0818</name>
</gene>
<sequence>MGRRYFGTDGIRGTVGEAPITPDFVLRLGYAAGKVLAGSADVAAGSRPTVLIGKDTRVSGYMLEAALEAGFSAAGVDVMLAGPMPTPGVAYLTRALRLSAGVVISASHNPYHDNGIKFFSADGNKLPDDTEAAIEAWLDKPLECAPSDGLGKARRLDDAAGRYIEFCKSTFPAAFDLRGLKLVIDCAHGAAYQIAPHVFHELGADVIPIGVAPNGFNINDGVGATAPDALVRAVRANHADLGIALDGDADRLQVVDATGRLYNGDELLYVLVKDRIATDGKVDGAVGTLMTNLAVEVALQREGVKFVRAAVGDRYVLEQLREHGWQLGAEGSGHILSLDRHSTGDGIVSALLVLAALKRSGRTLAQVLDGVTLFPQKLINVRMKPGADWKGSASIRAAIDAAEAALAGSGRVLIRASGTEPVLRVMVEAQQAADAVRHAETIADAVRAATT</sequence>
<dbReference type="EC" id="5.4.2.10" evidence="1"/>
<dbReference type="EMBL" id="CP000378">
    <property type="protein sequence ID" value="ABF75728.1"/>
    <property type="molecule type" value="Genomic_DNA"/>
</dbReference>
<dbReference type="SMR" id="Q1BXC7"/>
<dbReference type="HOGENOM" id="CLU_016950_7_0_4"/>
<dbReference type="GO" id="GO:0005829">
    <property type="term" value="C:cytosol"/>
    <property type="evidence" value="ECO:0007669"/>
    <property type="project" value="TreeGrafter"/>
</dbReference>
<dbReference type="GO" id="GO:0000287">
    <property type="term" value="F:magnesium ion binding"/>
    <property type="evidence" value="ECO:0007669"/>
    <property type="project" value="UniProtKB-UniRule"/>
</dbReference>
<dbReference type="GO" id="GO:0008966">
    <property type="term" value="F:phosphoglucosamine mutase activity"/>
    <property type="evidence" value="ECO:0007669"/>
    <property type="project" value="UniProtKB-UniRule"/>
</dbReference>
<dbReference type="GO" id="GO:0004615">
    <property type="term" value="F:phosphomannomutase activity"/>
    <property type="evidence" value="ECO:0007669"/>
    <property type="project" value="TreeGrafter"/>
</dbReference>
<dbReference type="GO" id="GO:0005975">
    <property type="term" value="P:carbohydrate metabolic process"/>
    <property type="evidence" value="ECO:0007669"/>
    <property type="project" value="InterPro"/>
</dbReference>
<dbReference type="GO" id="GO:0009252">
    <property type="term" value="P:peptidoglycan biosynthetic process"/>
    <property type="evidence" value="ECO:0007669"/>
    <property type="project" value="TreeGrafter"/>
</dbReference>
<dbReference type="GO" id="GO:0006048">
    <property type="term" value="P:UDP-N-acetylglucosamine biosynthetic process"/>
    <property type="evidence" value="ECO:0007669"/>
    <property type="project" value="TreeGrafter"/>
</dbReference>
<dbReference type="CDD" id="cd05802">
    <property type="entry name" value="GlmM"/>
    <property type="match status" value="1"/>
</dbReference>
<dbReference type="FunFam" id="3.30.310.50:FF:000001">
    <property type="entry name" value="Phosphoglucosamine mutase"/>
    <property type="match status" value="1"/>
</dbReference>
<dbReference type="FunFam" id="3.40.120.10:FF:000001">
    <property type="entry name" value="Phosphoglucosamine mutase"/>
    <property type="match status" value="1"/>
</dbReference>
<dbReference type="FunFam" id="3.40.120.10:FF:000003">
    <property type="entry name" value="Phosphoglucosamine mutase"/>
    <property type="match status" value="1"/>
</dbReference>
<dbReference type="Gene3D" id="3.40.120.10">
    <property type="entry name" value="Alpha-D-Glucose-1,6-Bisphosphate, subunit A, domain 3"/>
    <property type="match status" value="3"/>
</dbReference>
<dbReference type="Gene3D" id="3.30.310.50">
    <property type="entry name" value="Alpha-D-phosphohexomutase, C-terminal domain"/>
    <property type="match status" value="1"/>
</dbReference>
<dbReference type="HAMAP" id="MF_01554_B">
    <property type="entry name" value="GlmM_B"/>
    <property type="match status" value="1"/>
</dbReference>
<dbReference type="InterPro" id="IPR005844">
    <property type="entry name" value="A-D-PHexomutase_a/b/a-I"/>
</dbReference>
<dbReference type="InterPro" id="IPR016055">
    <property type="entry name" value="A-D-PHexomutase_a/b/a-I/II/III"/>
</dbReference>
<dbReference type="InterPro" id="IPR005845">
    <property type="entry name" value="A-D-PHexomutase_a/b/a-II"/>
</dbReference>
<dbReference type="InterPro" id="IPR005846">
    <property type="entry name" value="A-D-PHexomutase_a/b/a-III"/>
</dbReference>
<dbReference type="InterPro" id="IPR005843">
    <property type="entry name" value="A-D-PHexomutase_C"/>
</dbReference>
<dbReference type="InterPro" id="IPR036900">
    <property type="entry name" value="A-D-PHexomutase_C_sf"/>
</dbReference>
<dbReference type="InterPro" id="IPR016066">
    <property type="entry name" value="A-D-PHexomutase_CS"/>
</dbReference>
<dbReference type="InterPro" id="IPR005841">
    <property type="entry name" value="Alpha-D-phosphohexomutase_SF"/>
</dbReference>
<dbReference type="InterPro" id="IPR006352">
    <property type="entry name" value="GlmM_bact"/>
</dbReference>
<dbReference type="InterPro" id="IPR050060">
    <property type="entry name" value="Phosphoglucosamine_mutase"/>
</dbReference>
<dbReference type="NCBIfam" id="TIGR01455">
    <property type="entry name" value="glmM"/>
    <property type="match status" value="1"/>
</dbReference>
<dbReference type="NCBIfam" id="NF008139">
    <property type="entry name" value="PRK10887.1"/>
    <property type="match status" value="1"/>
</dbReference>
<dbReference type="PANTHER" id="PTHR42946:SF1">
    <property type="entry name" value="PHOSPHOGLUCOMUTASE (ALPHA-D-GLUCOSE-1,6-BISPHOSPHATE-DEPENDENT)"/>
    <property type="match status" value="1"/>
</dbReference>
<dbReference type="PANTHER" id="PTHR42946">
    <property type="entry name" value="PHOSPHOHEXOSE MUTASE"/>
    <property type="match status" value="1"/>
</dbReference>
<dbReference type="Pfam" id="PF02878">
    <property type="entry name" value="PGM_PMM_I"/>
    <property type="match status" value="1"/>
</dbReference>
<dbReference type="Pfam" id="PF02879">
    <property type="entry name" value="PGM_PMM_II"/>
    <property type="match status" value="1"/>
</dbReference>
<dbReference type="Pfam" id="PF02880">
    <property type="entry name" value="PGM_PMM_III"/>
    <property type="match status" value="1"/>
</dbReference>
<dbReference type="Pfam" id="PF00408">
    <property type="entry name" value="PGM_PMM_IV"/>
    <property type="match status" value="1"/>
</dbReference>
<dbReference type="PRINTS" id="PR00509">
    <property type="entry name" value="PGMPMM"/>
</dbReference>
<dbReference type="SUPFAM" id="SSF55957">
    <property type="entry name" value="Phosphoglucomutase, C-terminal domain"/>
    <property type="match status" value="1"/>
</dbReference>
<dbReference type="SUPFAM" id="SSF53738">
    <property type="entry name" value="Phosphoglucomutase, first 3 domains"/>
    <property type="match status" value="3"/>
</dbReference>
<dbReference type="PROSITE" id="PS00710">
    <property type="entry name" value="PGM_PMM"/>
    <property type="match status" value="1"/>
</dbReference>